<organism>
    <name type="scientific">Homo sapiens</name>
    <name type="common">Human</name>
    <dbReference type="NCBI Taxonomy" id="9606"/>
    <lineage>
        <taxon>Eukaryota</taxon>
        <taxon>Metazoa</taxon>
        <taxon>Chordata</taxon>
        <taxon>Craniata</taxon>
        <taxon>Vertebrata</taxon>
        <taxon>Euteleostomi</taxon>
        <taxon>Mammalia</taxon>
        <taxon>Eutheria</taxon>
        <taxon>Euarchontoglires</taxon>
        <taxon>Primates</taxon>
        <taxon>Haplorrhini</taxon>
        <taxon>Catarrhini</taxon>
        <taxon>Hominidae</taxon>
        <taxon>Homo</taxon>
    </lineage>
</organism>
<protein>
    <recommendedName>
        <fullName evidence="1">Sialate:O-sulfotransferase 2</fullName>
    </recommendedName>
    <alternativeName>
        <fullName>WSC domain-containing protein 2</fullName>
    </alternativeName>
</protein>
<evidence type="ECO:0000250" key="1">
    <source>
        <dbReference type="UniProtKB" id="D4PHA7"/>
    </source>
</evidence>
<evidence type="ECO:0000255" key="2"/>
<evidence type="ECO:0000255" key="3">
    <source>
        <dbReference type="PROSITE-ProRule" id="PRU00558"/>
    </source>
</evidence>
<evidence type="ECO:0000269" key="4">
    <source>
    </source>
</evidence>
<evidence type="ECO:0000303" key="5">
    <source>
    </source>
</evidence>
<evidence type="ECO:0000305" key="6"/>
<name>WSCD2_HUMAN</name>
<accession>Q2TBF2</accession>
<accession>B2RN48</accession>
<accession>B4DES1</accession>
<accession>Q8IY35</accession>
<accession>Q9Y4B7</accession>
<gene>
    <name type="primary">WSCD2</name>
    <name type="synonym">KIAA0789</name>
</gene>
<keyword id="KW-0025">Alternative splicing</keyword>
<keyword id="KW-0325">Glycoprotein</keyword>
<keyword id="KW-0333">Golgi apparatus</keyword>
<keyword id="KW-0472">Membrane</keyword>
<keyword id="KW-1267">Proteomics identification</keyword>
<keyword id="KW-1185">Reference proteome</keyword>
<keyword id="KW-0677">Repeat</keyword>
<keyword id="KW-0735">Signal-anchor</keyword>
<keyword id="KW-0812">Transmembrane</keyword>
<keyword id="KW-1133">Transmembrane helix</keyword>
<dbReference type="EMBL" id="AB018332">
    <property type="protein sequence ID" value="BAA34509.2"/>
    <property type="status" value="ALT_INIT"/>
    <property type="molecule type" value="mRNA"/>
</dbReference>
<dbReference type="EMBL" id="AK293764">
    <property type="protein sequence ID" value="BAG57182.1"/>
    <property type="molecule type" value="mRNA"/>
</dbReference>
<dbReference type="EMBL" id="CH471054">
    <property type="protein sequence ID" value="EAW97809.1"/>
    <property type="molecule type" value="Genomic_DNA"/>
</dbReference>
<dbReference type="EMBL" id="BC037969">
    <property type="protein sequence ID" value="AAH37969.2"/>
    <property type="status" value="ALT_SEQ"/>
    <property type="molecule type" value="mRNA"/>
</dbReference>
<dbReference type="EMBL" id="BC110330">
    <property type="protein sequence ID" value="AAI10331.1"/>
    <property type="molecule type" value="mRNA"/>
</dbReference>
<dbReference type="EMBL" id="BC136687">
    <property type="protein sequence ID" value="AAI36688.1"/>
    <property type="molecule type" value="mRNA"/>
</dbReference>
<dbReference type="EMBL" id="BC136688">
    <property type="protein sequence ID" value="AAI36689.1"/>
    <property type="molecule type" value="mRNA"/>
</dbReference>
<dbReference type="CCDS" id="CCDS41828.1">
    <molecule id="Q2TBF2-1"/>
</dbReference>
<dbReference type="RefSeq" id="NP_001291376.1">
    <molecule id="Q2TBF2-1"/>
    <property type="nucleotide sequence ID" value="NM_001304447.2"/>
</dbReference>
<dbReference type="RefSeq" id="NP_055468.2">
    <molecule id="Q2TBF2-1"/>
    <property type="nucleotide sequence ID" value="NM_014653.3"/>
</dbReference>
<dbReference type="RefSeq" id="XP_016875732.1">
    <molecule id="Q2TBF2-1"/>
    <property type="nucleotide sequence ID" value="XM_017020243.2"/>
</dbReference>
<dbReference type="RefSeq" id="XP_016875733.1">
    <molecule id="Q2TBF2-1"/>
    <property type="nucleotide sequence ID" value="XM_017020244.2"/>
</dbReference>
<dbReference type="RefSeq" id="XP_016875734.1">
    <molecule id="Q2TBF2-1"/>
    <property type="nucleotide sequence ID" value="XM_017020245.2"/>
</dbReference>
<dbReference type="RefSeq" id="XP_016875735.1">
    <molecule id="Q2TBF2-1"/>
    <property type="nucleotide sequence ID" value="XM_017020246.3"/>
</dbReference>
<dbReference type="RefSeq" id="XP_016875736.1">
    <molecule id="Q2TBF2-1"/>
    <property type="nucleotide sequence ID" value="XM_017020247.2"/>
</dbReference>
<dbReference type="RefSeq" id="XP_016875737.1">
    <molecule id="Q2TBF2-1"/>
    <property type="nucleotide sequence ID" value="XM_017020248.2"/>
</dbReference>
<dbReference type="SMR" id="Q2TBF2"/>
<dbReference type="BioGRID" id="115026">
    <property type="interactions" value="1"/>
</dbReference>
<dbReference type="FunCoup" id="Q2TBF2">
    <property type="interactions" value="238"/>
</dbReference>
<dbReference type="STRING" id="9606.ENSP00000448047"/>
<dbReference type="GlyCosmos" id="Q2TBF2">
    <property type="glycosylation" value="2 sites, No reported glycans"/>
</dbReference>
<dbReference type="GlyGen" id="Q2TBF2">
    <property type="glycosylation" value="2 sites"/>
</dbReference>
<dbReference type="iPTMnet" id="Q2TBF2"/>
<dbReference type="PhosphoSitePlus" id="Q2TBF2"/>
<dbReference type="BioMuta" id="WSCD2"/>
<dbReference type="DMDM" id="158706498"/>
<dbReference type="jPOST" id="Q2TBF2"/>
<dbReference type="MassIVE" id="Q2TBF2"/>
<dbReference type="PaxDb" id="9606-ENSP00000331933"/>
<dbReference type="PeptideAtlas" id="Q2TBF2"/>
<dbReference type="ProteomicsDB" id="61494">
    <molecule id="Q2TBF2-1"/>
</dbReference>
<dbReference type="ProteomicsDB" id="61495">
    <molecule id="Q2TBF2-2"/>
</dbReference>
<dbReference type="Antibodypedia" id="2240">
    <property type="antibodies" value="89 antibodies from 20 providers"/>
</dbReference>
<dbReference type="DNASU" id="9671"/>
<dbReference type="Ensembl" id="ENST00000332082.8">
    <molecule id="Q2TBF2-1"/>
    <property type="protein sequence ID" value="ENSP00000331933.4"/>
    <property type="gene ID" value="ENSG00000075035.10"/>
</dbReference>
<dbReference type="Ensembl" id="ENST00000547525.6">
    <molecule id="Q2TBF2-1"/>
    <property type="protein sequence ID" value="ENSP00000448047.1"/>
    <property type="gene ID" value="ENSG00000075035.10"/>
</dbReference>
<dbReference type="Ensembl" id="ENST00000549903.1">
    <molecule id="Q2TBF2-2"/>
    <property type="protein sequence ID" value="ENSP00000447272.1"/>
    <property type="gene ID" value="ENSG00000075035.10"/>
</dbReference>
<dbReference type="GeneID" id="9671"/>
<dbReference type="KEGG" id="hsa:9671"/>
<dbReference type="MANE-Select" id="ENST00000547525.6">
    <property type="protein sequence ID" value="ENSP00000448047.1"/>
    <property type="RefSeq nucleotide sequence ID" value="NM_014653.4"/>
    <property type="RefSeq protein sequence ID" value="NP_055468.2"/>
</dbReference>
<dbReference type="UCSC" id="uc001tms.4">
    <molecule id="Q2TBF2-1"/>
    <property type="organism name" value="human"/>
</dbReference>
<dbReference type="AGR" id="HGNC:29117"/>
<dbReference type="CTD" id="9671"/>
<dbReference type="DisGeNET" id="9671"/>
<dbReference type="GeneCards" id="WSCD2"/>
<dbReference type="HGNC" id="HGNC:29117">
    <property type="gene designation" value="WSCD2"/>
</dbReference>
<dbReference type="HPA" id="ENSG00000075035">
    <property type="expression patterns" value="Tissue enriched (brain)"/>
</dbReference>
<dbReference type="MIM" id="619253">
    <property type="type" value="gene"/>
</dbReference>
<dbReference type="neXtProt" id="NX_Q2TBF2"/>
<dbReference type="OpenTargets" id="ENSG00000075035"/>
<dbReference type="PharmGKB" id="PA162409276"/>
<dbReference type="VEuPathDB" id="HostDB:ENSG00000075035"/>
<dbReference type="eggNOG" id="KOG4157">
    <property type="taxonomic scope" value="Eukaryota"/>
</dbReference>
<dbReference type="GeneTree" id="ENSGT00940000159434"/>
<dbReference type="HOGENOM" id="CLU_029239_0_0_1"/>
<dbReference type="InParanoid" id="Q2TBF2"/>
<dbReference type="OMA" id="ERSNTCG"/>
<dbReference type="OrthoDB" id="5985073at2759"/>
<dbReference type="PAN-GO" id="Q2TBF2">
    <property type="GO annotations" value="0 GO annotations based on evolutionary models"/>
</dbReference>
<dbReference type="PhylomeDB" id="Q2TBF2"/>
<dbReference type="TreeFam" id="TF324060"/>
<dbReference type="PathwayCommons" id="Q2TBF2"/>
<dbReference type="BioGRID-ORCS" id="9671">
    <property type="hits" value="164 hits in 1134 CRISPR screens"/>
</dbReference>
<dbReference type="ChiTaRS" id="WSCD2">
    <property type="organism name" value="human"/>
</dbReference>
<dbReference type="GenomeRNAi" id="9671"/>
<dbReference type="Pharos" id="Q2TBF2">
    <property type="development level" value="Tdark"/>
</dbReference>
<dbReference type="PRO" id="PR:Q2TBF2"/>
<dbReference type="Proteomes" id="UP000005640">
    <property type="component" value="Chromosome 12"/>
</dbReference>
<dbReference type="RNAct" id="Q2TBF2">
    <property type="molecule type" value="protein"/>
</dbReference>
<dbReference type="Bgee" id="ENSG00000075035">
    <property type="expression patterns" value="Expressed in cerebellar cortex and 141 other cell types or tissues"/>
</dbReference>
<dbReference type="ExpressionAtlas" id="Q2TBF2">
    <property type="expression patterns" value="baseline and differential"/>
</dbReference>
<dbReference type="GO" id="GO:0000139">
    <property type="term" value="C:Golgi membrane"/>
    <property type="evidence" value="ECO:0000250"/>
    <property type="project" value="UniProtKB"/>
</dbReference>
<dbReference type="GO" id="GO:0008146">
    <property type="term" value="F:sulfotransferase activity"/>
    <property type="evidence" value="ECO:0000250"/>
    <property type="project" value="UniProtKB"/>
</dbReference>
<dbReference type="Gene3D" id="3.40.50.300">
    <property type="entry name" value="P-loop containing nucleotide triphosphate hydrolases"/>
    <property type="match status" value="1"/>
</dbReference>
<dbReference type="InterPro" id="IPR027417">
    <property type="entry name" value="P-loop_NTPase"/>
</dbReference>
<dbReference type="InterPro" id="IPR051589">
    <property type="entry name" value="Sialate-O-sulfotransferase"/>
</dbReference>
<dbReference type="InterPro" id="IPR002889">
    <property type="entry name" value="WSC_carb-bd"/>
</dbReference>
<dbReference type="PANTHER" id="PTHR45964:SF7">
    <property type="entry name" value="SIALATE:O-SULFOTRANSFERASE 2"/>
    <property type="match status" value="1"/>
</dbReference>
<dbReference type="PANTHER" id="PTHR45964">
    <property type="entry name" value="WSCD FAMILY MEMBER CG9164"/>
    <property type="match status" value="1"/>
</dbReference>
<dbReference type="Pfam" id="PF01822">
    <property type="entry name" value="WSC"/>
    <property type="match status" value="2"/>
</dbReference>
<dbReference type="SMART" id="SM00321">
    <property type="entry name" value="WSC"/>
    <property type="match status" value="2"/>
</dbReference>
<dbReference type="SUPFAM" id="SSF52540">
    <property type="entry name" value="P-loop containing nucleoside triphosphate hydrolases"/>
    <property type="match status" value="1"/>
</dbReference>
<dbReference type="PROSITE" id="PS51212">
    <property type="entry name" value="WSC"/>
    <property type="match status" value="2"/>
</dbReference>
<proteinExistence type="evidence at protein level"/>
<sequence>MAKLWFKFQRYFRRKPVRFFTFLALYLTAGSLVFLHSGFVGQPAVSGNQANPAAAGGPAEGAELSFLGDMHLGRGFRDTGEASSIARRYGPWFKGKDGNERAKLGDYGGAWSRALKGRVVREKEEERAKYIGCYLDDTQSRALRGVSFFDYKKMTIFRCQDNCAERGYLYGGLEFGAECYCGHKIQATNVSEAECDMECKGERGSVCGGANRLSVYRLQLAQESARRYGSAVFRGCFRRPDNLSLALPVTAAMLNMSVDKCVDFCTEKEYPLAALAGTACHCGFPTTRFPLHDREDEQLCAQKCSAEEFESCGTPSYFIVYQTQVQDNRCMDRRFLPGKSKQLIALASFPGAGNTWARHLIELATGFYTGSYYFDGSLYNKGFKGERDHWRSGRTICIKTHESGQKEIEAFDAAILLIRNPYKALMAEFNRKYGGHIGFAAHAHWKGKEWPEFVRNYAPWWATHTLDWLKFGKKVLVVHFEDLKQDLFVQLGRMVSLLGVAVREDRLLCVESQKDGNFKRSGLRKLEYDPYTADMQKTISAYIKMVDAALKGRNLTGVPDDYYPR</sequence>
<feature type="chain" id="PRO_0000305065" description="Sialate:O-sulfotransferase 2">
    <location>
        <begin position="1"/>
        <end position="565"/>
    </location>
</feature>
<feature type="topological domain" description="Cytoplasmic" evidence="1">
    <location>
        <begin position="1"/>
        <end position="18"/>
    </location>
</feature>
<feature type="transmembrane region" description="Helical; Signal-anchor for type II membrane protein" evidence="2">
    <location>
        <begin position="19"/>
        <end position="41"/>
    </location>
</feature>
<feature type="topological domain" description="Extracellular" evidence="1">
    <location>
        <begin position="42"/>
        <end position="565"/>
    </location>
</feature>
<feature type="domain" description="WSC 1" evidence="3">
    <location>
        <begin position="127"/>
        <end position="219"/>
    </location>
</feature>
<feature type="domain" description="WSC 2" evidence="3">
    <location>
        <begin position="230"/>
        <end position="324"/>
    </location>
</feature>
<feature type="glycosylation site" description="N-linked (GlcNAc...) asparagine" evidence="2">
    <location>
        <position position="189"/>
    </location>
</feature>
<feature type="glycosylation site" description="N-linked (GlcNAc...) asparagine" evidence="2">
    <location>
        <position position="242"/>
    </location>
</feature>
<feature type="splice variant" id="VSP_028211" description="In isoform 2." evidence="5">
    <original>K</original>
    <variation>KGAVPGSLQILFRSICTASVG</variation>
    <location>
        <position position="448"/>
    </location>
</feature>
<feature type="sequence variant" id="VAR_035161" description="In dbSNP:rs3764002." evidence="4">
    <original>T</original>
    <variation>I</variation>
    <location>
        <position position="266"/>
    </location>
</feature>
<feature type="sequence conflict" description="In Ref. 3; BAG57182." evidence="6" ref="3">
    <original>V</original>
    <variation>D</variation>
    <location>
        <position position="325"/>
    </location>
</feature>
<feature type="sequence conflict" description="In Ref. 3; BAG57182." evidence="6" ref="3">
    <original>F</original>
    <variation>S</variation>
    <location>
        <position position="367"/>
    </location>
</feature>
<reference key="1">
    <citation type="journal article" date="1998" name="DNA Res.">
        <title>Prediction of the coding sequences of unidentified human genes. XI. The complete sequences of 100 new cDNA clones from brain which code for large proteins in vitro.</title>
        <authorList>
            <person name="Nagase T."/>
            <person name="Ishikawa K."/>
            <person name="Suyama M."/>
            <person name="Kikuno R."/>
            <person name="Miyajima N."/>
            <person name="Tanaka A."/>
            <person name="Kotani H."/>
            <person name="Nomura N."/>
            <person name="Ohara O."/>
        </authorList>
    </citation>
    <scope>NUCLEOTIDE SEQUENCE [LARGE SCALE MRNA] (ISOFORM 1)</scope>
    <source>
        <tissue>Brain</tissue>
    </source>
</reference>
<reference key="2">
    <citation type="journal article" date="2002" name="DNA Res.">
        <title>Construction of expression-ready cDNA clones for KIAA genes: manual curation of 330 KIAA cDNA clones.</title>
        <authorList>
            <person name="Nakajima D."/>
            <person name="Okazaki N."/>
            <person name="Yamakawa H."/>
            <person name="Kikuno R."/>
            <person name="Ohara O."/>
            <person name="Nagase T."/>
        </authorList>
    </citation>
    <scope>SEQUENCE REVISION</scope>
</reference>
<reference key="3">
    <citation type="journal article" date="2004" name="Nat. Genet.">
        <title>Complete sequencing and characterization of 21,243 full-length human cDNAs.</title>
        <authorList>
            <person name="Ota T."/>
            <person name="Suzuki Y."/>
            <person name="Nishikawa T."/>
            <person name="Otsuki T."/>
            <person name="Sugiyama T."/>
            <person name="Irie R."/>
            <person name="Wakamatsu A."/>
            <person name="Hayashi K."/>
            <person name="Sato H."/>
            <person name="Nagai K."/>
            <person name="Kimura K."/>
            <person name="Makita H."/>
            <person name="Sekine M."/>
            <person name="Obayashi M."/>
            <person name="Nishi T."/>
            <person name="Shibahara T."/>
            <person name="Tanaka T."/>
            <person name="Ishii S."/>
            <person name="Yamamoto J."/>
            <person name="Saito K."/>
            <person name="Kawai Y."/>
            <person name="Isono Y."/>
            <person name="Nakamura Y."/>
            <person name="Nagahari K."/>
            <person name="Murakami K."/>
            <person name="Yasuda T."/>
            <person name="Iwayanagi T."/>
            <person name="Wagatsuma M."/>
            <person name="Shiratori A."/>
            <person name="Sudo H."/>
            <person name="Hosoiri T."/>
            <person name="Kaku Y."/>
            <person name="Kodaira H."/>
            <person name="Kondo H."/>
            <person name="Sugawara M."/>
            <person name="Takahashi M."/>
            <person name="Kanda K."/>
            <person name="Yokoi T."/>
            <person name="Furuya T."/>
            <person name="Kikkawa E."/>
            <person name="Omura Y."/>
            <person name="Abe K."/>
            <person name="Kamihara K."/>
            <person name="Katsuta N."/>
            <person name="Sato K."/>
            <person name="Tanikawa M."/>
            <person name="Yamazaki M."/>
            <person name="Ninomiya K."/>
            <person name="Ishibashi T."/>
            <person name="Yamashita H."/>
            <person name="Murakawa K."/>
            <person name="Fujimori K."/>
            <person name="Tanai H."/>
            <person name="Kimata M."/>
            <person name="Watanabe M."/>
            <person name="Hiraoka S."/>
            <person name="Chiba Y."/>
            <person name="Ishida S."/>
            <person name="Ono Y."/>
            <person name="Takiguchi S."/>
            <person name="Watanabe S."/>
            <person name="Yosida M."/>
            <person name="Hotuta T."/>
            <person name="Kusano J."/>
            <person name="Kanehori K."/>
            <person name="Takahashi-Fujii A."/>
            <person name="Hara H."/>
            <person name="Tanase T.-O."/>
            <person name="Nomura Y."/>
            <person name="Togiya S."/>
            <person name="Komai F."/>
            <person name="Hara R."/>
            <person name="Takeuchi K."/>
            <person name="Arita M."/>
            <person name="Imose N."/>
            <person name="Musashino K."/>
            <person name="Yuuki H."/>
            <person name="Oshima A."/>
            <person name="Sasaki N."/>
            <person name="Aotsuka S."/>
            <person name="Yoshikawa Y."/>
            <person name="Matsunawa H."/>
            <person name="Ichihara T."/>
            <person name="Shiohata N."/>
            <person name="Sano S."/>
            <person name="Moriya S."/>
            <person name="Momiyama H."/>
            <person name="Satoh N."/>
            <person name="Takami S."/>
            <person name="Terashima Y."/>
            <person name="Suzuki O."/>
            <person name="Nakagawa S."/>
            <person name="Senoh A."/>
            <person name="Mizoguchi H."/>
            <person name="Goto Y."/>
            <person name="Shimizu F."/>
            <person name="Wakebe H."/>
            <person name="Hishigaki H."/>
            <person name="Watanabe T."/>
            <person name="Sugiyama A."/>
            <person name="Takemoto M."/>
            <person name="Kawakami B."/>
            <person name="Yamazaki M."/>
            <person name="Watanabe K."/>
            <person name="Kumagai A."/>
            <person name="Itakura S."/>
            <person name="Fukuzumi Y."/>
            <person name="Fujimori Y."/>
            <person name="Komiyama M."/>
            <person name="Tashiro H."/>
            <person name="Tanigami A."/>
            <person name="Fujiwara T."/>
            <person name="Ono T."/>
            <person name="Yamada K."/>
            <person name="Fujii Y."/>
            <person name="Ozaki K."/>
            <person name="Hirao M."/>
            <person name="Ohmori Y."/>
            <person name="Kawabata A."/>
            <person name="Hikiji T."/>
            <person name="Kobatake N."/>
            <person name="Inagaki H."/>
            <person name="Ikema Y."/>
            <person name="Okamoto S."/>
            <person name="Okitani R."/>
            <person name="Kawakami T."/>
            <person name="Noguchi S."/>
            <person name="Itoh T."/>
            <person name="Shigeta K."/>
            <person name="Senba T."/>
            <person name="Matsumura K."/>
            <person name="Nakajima Y."/>
            <person name="Mizuno T."/>
            <person name="Morinaga M."/>
            <person name="Sasaki M."/>
            <person name="Togashi T."/>
            <person name="Oyama M."/>
            <person name="Hata H."/>
            <person name="Watanabe M."/>
            <person name="Komatsu T."/>
            <person name="Mizushima-Sugano J."/>
            <person name="Satoh T."/>
            <person name="Shirai Y."/>
            <person name="Takahashi Y."/>
            <person name="Nakagawa K."/>
            <person name="Okumura K."/>
            <person name="Nagase T."/>
            <person name="Nomura N."/>
            <person name="Kikuchi H."/>
            <person name="Masuho Y."/>
            <person name="Yamashita R."/>
            <person name="Nakai K."/>
            <person name="Yada T."/>
            <person name="Nakamura Y."/>
            <person name="Ohara O."/>
            <person name="Isogai T."/>
            <person name="Sugano S."/>
        </authorList>
    </citation>
    <scope>NUCLEOTIDE SEQUENCE [LARGE SCALE MRNA]</scope>
    <source>
        <tissue>Cerebellum</tissue>
    </source>
</reference>
<reference key="4">
    <citation type="submission" date="2005-07" db="EMBL/GenBank/DDBJ databases">
        <authorList>
            <person name="Mural R.J."/>
            <person name="Istrail S."/>
            <person name="Sutton G.G."/>
            <person name="Florea L."/>
            <person name="Halpern A.L."/>
            <person name="Mobarry C.M."/>
            <person name="Lippert R."/>
            <person name="Walenz B."/>
            <person name="Shatkay H."/>
            <person name="Dew I."/>
            <person name="Miller J.R."/>
            <person name="Flanigan M.J."/>
            <person name="Edwards N.J."/>
            <person name="Bolanos R."/>
            <person name="Fasulo D."/>
            <person name="Halldorsson B.V."/>
            <person name="Hannenhalli S."/>
            <person name="Turner R."/>
            <person name="Yooseph S."/>
            <person name="Lu F."/>
            <person name="Nusskern D.R."/>
            <person name="Shue B.C."/>
            <person name="Zheng X.H."/>
            <person name="Zhong F."/>
            <person name="Delcher A.L."/>
            <person name="Huson D.H."/>
            <person name="Kravitz S.A."/>
            <person name="Mouchard L."/>
            <person name="Reinert K."/>
            <person name="Remington K.A."/>
            <person name="Clark A.G."/>
            <person name="Waterman M.S."/>
            <person name="Eichler E.E."/>
            <person name="Adams M.D."/>
            <person name="Hunkapiller M.W."/>
            <person name="Myers E.W."/>
            <person name="Venter J.C."/>
        </authorList>
    </citation>
    <scope>NUCLEOTIDE SEQUENCE [LARGE SCALE GENOMIC DNA]</scope>
</reference>
<reference key="5">
    <citation type="journal article" date="2004" name="Genome Res.">
        <title>The status, quality, and expansion of the NIH full-length cDNA project: the Mammalian Gene Collection (MGC).</title>
        <authorList>
            <consortium name="The MGC Project Team"/>
        </authorList>
    </citation>
    <scope>NUCLEOTIDE SEQUENCE [LARGE SCALE MRNA] (ISOFORM 1)</scope>
    <scope>NUCLEOTIDE SEQUENCE [LARGE SCALE MRNA] OF 261-565 (ISOFORM 2)</scope>
    <scope>VARIANT ILE-266</scope>
    <source>
        <tissue>Brain</tissue>
        <tissue>Testis</tissue>
        <tissue>Urinary bladder</tissue>
    </source>
</reference>
<comment type="function">
    <text evidence="1">Sialate:O-sulfotransferase which catalyzes 8-O-sulfation at the Sia-glycan level using 3'-phosphoadenosine 5'-phosphosulfate (PAPS) as a donor, forming 8-O-sulfated Sia (Sia8S)-glycans. Displays selectivity toward glycoproteins such as TF/transferrin.</text>
</comment>
<comment type="subcellular location">
    <subcellularLocation>
        <location evidence="1">Golgi apparatus membrane</location>
        <topology evidence="1">Single-pass type II membrane protein</topology>
    </subcellularLocation>
</comment>
<comment type="alternative products">
    <event type="alternative splicing"/>
    <isoform>
        <id>Q2TBF2-1</id>
        <name>1</name>
        <sequence type="displayed"/>
    </isoform>
    <isoform>
        <id>Q2TBF2-2</id>
        <name>2</name>
        <sequence type="described" ref="VSP_028211"/>
    </isoform>
</comment>
<comment type="similarity">
    <text evidence="6">Belongs to the WSCD family.</text>
</comment>
<comment type="sequence caution" evidence="6">
    <conflict type="miscellaneous discrepancy">
        <sequence resource="EMBL-CDS" id="AAH37969"/>
    </conflict>
    <text>Contaminating sequence. The N-terminus may be contaminated with vector sequence.</text>
</comment>
<comment type="sequence caution" evidence="6">
    <conflict type="erroneous initiation">
        <sequence resource="EMBL-CDS" id="BAA34509"/>
    </conflict>
    <text>Extended N-terminus.</text>
</comment>